<sequence>MKKSARRQSRELATQGLYQWLLSNAPSGEIDAQLRGALGYDKADKELLEAILHGVIREHATLVEALAPSLDRPIDQLSPVERAVLLIATFELTHHVETPYRVIINEAVELAKTFGGSDGYKYVNGVLDKLAAKLRPAETQARRNG</sequence>
<reference key="1">
    <citation type="submission" date="2008-02" db="EMBL/GenBank/DDBJ databases">
        <title>Complete sequence of chromosome 1 of Burkholderia cenocepacia MC0-3.</title>
        <authorList>
            <person name="Copeland A."/>
            <person name="Lucas S."/>
            <person name="Lapidus A."/>
            <person name="Barry K."/>
            <person name="Bruce D."/>
            <person name="Goodwin L."/>
            <person name="Glavina del Rio T."/>
            <person name="Dalin E."/>
            <person name="Tice H."/>
            <person name="Pitluck S."/>
            <person name="Chain P."/>
            <person name="Malfatti S."/>
            <person name="Shin M."/>
            <person name="Vergez L."/>
            <person name="Schmutz J."/>
            <person name="Larimer F."/>
            <person name="Land M."/>
            <person name="Hauser L."/>
            <person name="Kyrpides N."/>
            <person name="Mikhailova N."/>
            <person name="Tiedje J."/>
            <person name="Richardson P."/>
        </authorList>
    </citation>
    <scope>NUCLEOTIDE SEQUENCE [LARGE SCALE GENOMIC DNA]</scope>
    <source>
        <strain>MC0-3</strain>
    </source>
</reference>
<organism>
    <name type="scientific">Burkholderia orbicola (strain MC0-3)</name>
    <dbReference type="NCBI Taxonomy" id="406425"/>
    <lineage>
        <taxon>Bacteria</taxon>
        <taxon>Pseudomonadati</taxon>
        <taxon>Pseudomonadota</taxon>
        <taxon>Betaproteobacteria</taxon>
        <taxon>Burkholderiales</taxon>
        <taxon>Burkholderiaceae</taxon>
        <taxon>Burkholderia</taxon>
        <taxon>Burkholderia cepacia complex</taxon>
        <taxon>Burkholderia orbicola</taxon>
    </lineage>
</organism>
<proteinExistence type="inferred from homology"/>
<protein>
    <recommendedName>
        <fullName evidence="1">Transcription antitermination protein NusB</fullName>
    </recommendedName>
    <alternativeName>
        <fullName evidence="1">Antitermination factor NusB</fullName>
    </alternativeName>
</protein>
<dbReference type="EMBL" id="CP000958">
    <property type="protein sequence ID" value="ACA90094.1"/>
    <property type="molecule type" value="Genomic_DNA"/>
</dbReference>
<dbReference type="RefSeq" id="WP_006476662.1">
    <property type="nucleotide sequence ID" value="NC_010508.1"/>
</dbReference>
<dbReference type="SMR" id="B1JX75"/>
<dbReference type="GeneID" id="83047707"/>
<dbReference type="KEGG" id="bcm:Bcenmc03_0917"/>
<dbReference type="HOGENOM" id="CLU_087843_4_1_4"/>
<dbReference type="Proteomes" id="UP000002169">
    <property type="component" value="Chromosome 1"/>
</dbReference>
<dbReference type="GO" id="GO:0005829">
    <property type="term" value="C:cytosol"/>
    <property type="evidence" value="ECO:0007669"/>
    <property type="project" value="TreeGrafter"/>
</dbReference>
<dbReference type="GO" id="GO:0003723">
    <property type="term" value="F:RNA binding"/>
    <property type="evidence" value="ECO:0007669"/>
    <property type="project" value="UniProtKB-UniRule"/>
</dbReference>
<dbReference type="GO" id="GO:0006353">
    <property type="term" value="P:DNA-templated transcription termination"/>
    <property type="evidence" value="ECO:0007669"/>
    <property type="project" value="UniProtKB-UniRule"/>
</dbReference>
<dbReference type="GO" id="GO:0031564">
    <property type="term" value="P:transcription antitermination"/>
    <property type="evidence" value="ECO:0007669"/>
    <property type="project" value="UniProtKB-KW"/>
</dbReference>
<dbReference type="Gene3D" id="1.10.940.10">
    <property type="entry name" value="NusB-like"/>
    <property type="match status" value="1"/>
</dbReference>
<dbReference type="HAMAP" id="MF_00073">
    <property type="entry name" value="NusB"/>
    <property type="match status" value="1"/>
</dbReference>
<dbReference type="InterPro" id="IPR035926">
    <property type="entry name" value="NusB-like_sf"/>
</dbReference>
<dbReference type="InterPro" id="IPR011605">
    <property type="entry name" value="NusB_fam"/>
</dbReference>
<dbReference type="InterPro" id="IPR006027">
    <property type="entry name" value="NusB_RsmB_TIM44"/>
</dbReference>
<dbReference type="NCBIfam" id="TIGR01951">
    <property type="entry name" value="nusB"/>
    <property type="match status" value="1"/>
</dbReference>
<dbReference type="PANTHER" id="PTHR11078:SF3">
    <property type="entry name" value="ANTITERMINATION NUSB DOMAIN-CONTAINING PROTEIN"/>
    <property type="match status" value="1"/>
</dbReference>
<dbReference type="PANTHER" id="PTHR11078">
    <property type="entry name" value="N UTILIZATION SUBSTANCE PROTEIN B-RELATED"/>
    <property type="match status" value="1"/>
</dbReference>
<dbReference type="Pfam" id="PF01029">
    <property type="entry name" value="NusB"/>
    <property type="match status" value="1"/>
</dbReference>
<dbReference type="SUPFAM" id="SSF48013">
    <property type="entry name" value="NusB-like"/>
    <property type="match status" value="1"/>
</dbReference>
<comment type="function">
    <text evidence="1">Involved in transcription antitermination. Required for transcription of ribosomal RNA (rRNA) genes. Binds specifically to the boxA antiterminator sequence of the ribosomal RNA (rrn) operons.</text>
</comment>
<comment type="similarity">
    <text evidence="1">Belongs to the NusB family.</text>
</comment>
<feature type="chain" id="PRO_1000092530" description="Transcription antitermination protein NusB">
    <location>
        <begin position="1"/>
        <end position="145"/>
    </location>
</feature>
<accession>B1JX75</accession>
<gene>
    <name evidence="1" type="primary">nusB</name>
    <name type="ordered locus">Bcenmc03_0917</name>
</gene>
<evidence type="ECO:0000255" key="1">
    <source>
        <dbReference type="HAMAP-Rule" id="MF_00073"/>
    </source>
</evidence>
<keyword id="KW-0694">RNA-binding</keyword>
<keyword id="KW-0804">Transcription</keyword>
<keyword id="KW-0889">Transcription antitermination</keyword>
<keyword id="KW-0805">Transcription regulation</keyword>
<name>NUSB_BURO0</name>